<comment type="function">
    <text evidence="1">Binds to actin and affects the structure of the cytoskeleton. At high concentrations, profilin prevents the polymerization of actin, whereas it enhances it at low concentrations. By binding to PIP2, it inhibits the formation of IP3 and DG (By similarity).</text>
</comment>
<comment type="subunit">
    <text evidence="1">Occurs in many kinds of cells as a complex with monomeric actin in a 1:1 ratio.</text>
</comment>
<comment type="subcellular location">
    <subcellularLocation>
        <location evidence="1">Cytoplasm</location>
        <location evidence="1">Cytoskeleton</location>
    </subcellularLocation>
</comment>
<comment type="similarity">
    <text evidence="2">Belongs to the profilin family.</text>
</comment>
<organism>
    <name type="scientific">Dictyostelium discoideum</name>
    <name type="common">Social amoeba</name>
    <dbReference type="NCBI Taxonomy" id="44689"/>
    <lineage>
        <taxon>Eukaryota</taxon>
        <taxon>Amoebozoa</taxon>
        <taxon>Evosea</taxon>
        <taxon>Eumycetozoa</taxon>
        <taxon>Dictyostelia</taxon>
        <taxon>Dictyosteliales</taxon>
        <taxon>Dictyosteliaceae</taxon>
        <taxon>Dictyostelium</taxon>
    </lineage>
</organism>
<accession>Q8T8M2</accession>
<accession>Q55BI6</accession>
<reference key="1">
    <citation type="submission" date="2002-02" db="EMBL/GenBank/DDBJ databases">
        <title>Profilin III, a third profilin isoform in Dictyostelium discoideum.</title>
        <authorList>
            <person name="Gloss A."/>
            <person name="Noegel A.A."/>
            <person name="Schleicher M."/>
        </authorList>
    </citation>
    <scope>NUCLEOTIDE SEQUENCE [GENOMIC DNA]</scope>
    <source>
        <strain>AX2</strain>
    </source>
</reference>
<reference key="2">
    <citation type="journal article" date="2002" name="Nature">
        <title>Sequence and analysis of chromosome 2 of Dictyostelium discoideum.</title>
        <authorList>
            <person name="Gloeckner G."/>
            <person name="Eichinger L."/>
            <person name="Szafranski K."/>
            <person name="Pachebat J.A."/>
            <person name="Bankier A.T."/>
            <person name="Dear P.H."/>
            <person name="Lehmann R."/>
            <person name="Baumgart C."/>
            <person name="Parra G."/>
            <person name="Abril J.F."/>
            <person name="Guigo R."/>
            <person name="Kumpf K."/>
            <person name="Tunggal B."/>
            <person name="Cox E.C."/>
            <person name="Quail M.A."/>
            <person name="Platzer M."/>
            <person name="Rosenthal A."/>
            <person name="Noegel A.A."/>
        </authorList>
    </citation>
    <scope>NUCLEOTIDE SEQUENCE [LARGE SCALE GENOMIC DNA]</scope>
    <source>
        <strain>AX4</strain>
    </source>
</reference>
<reference key="3">
    <citation type="journal article" date="2005" name="Nature">
        <title>The genome of the social amoeba Dictyostelium discoideum.</title>
        <authorList>
            <person name="Eichinger L."/>
            <person name="Pachebat J.A."/>
            <person name="Gloeckner G."/>
            <person name="Rajandream M.A."/>
            <person name="Sucgang R."/>
            <person name="Berriman M."/>
            <person name="Song J."/>
            <person name="Olsen R."/>
            <person name="Szafranski K."/>
            <person name="Xu Q."/>
            <person name="Tunggal B."/>
            <person name="Kummerfeld S."/>
            <person name="Madera M."/>
            <person name="Konfortov B.A."/>
            <person name="Rivero F."/>
            <person name="Bankier A.T."/>
            <person name="Lehmann R."/>
            <person name="Hamlin N."/>
            <person name="Davies R."/>
            <person name="Gaudet P."/>
            <person name="Fey P."/>
            <person name="Pilcher K."/>
            <person name="Chen G."/>
            <person name="Saunders D."/>
            <person name="Sodergren E.J."/>
            <person name="Davis P."/>
            <person name="Kerhornou A."/>
            <person name="Nie X."/>
            <person name="Hall N."/>
            <person name="Anjard C."/>
            <person name="Hemphill L."/>
            <person name="Bason N."/>
            <person name="Farbrother P."/>
            <person name="Desany B."/>
            <person name="Just E."/>
            <person name="Morio T."/>
            <person name="Rost R."/>
            <person name="Churcher C.M."/>
            <person name="Cooper J."/>
            <person name="Haydock S."/>
            <person name="van Driessche N."/>
            <person name="Cronin A."/>
            <person name="Goodhead I."/>
            <person name="Muzny D.M."/>
            <person name="Mourier T."/>
            <person name="Pain A."/>
            <person name="Lu M."/>
            <person name="Harper D."/>
            <person name="Lindsay R."/>
            <person name="Hauser H."/>
            <person name="James K.D."/>
            <person name="Quiles M."/>
            <person name="Madan Babu M."/>
            <person name="Saito T."/>
            <person name="Buchrieser C."/>
            <person name="Wardroper A."/>
            <person name="Felder M."/>
            <person name="Thangavelu M."/>
            <person name="Johnson D."/>
            <person name="Knights A."/>
            <person name="Loulseged H."/>
            <person name="Mungall K.L."/>
            <person name="Oliver K."/>
            <person name="Price C."/>
            <person name="Quail M.A."/>
            <person name="Urushihara H."/>
            <person name="Hernandez J."/>
            <person name="Rabbinowitsch E."/>
            <person name="Steffen D."/>
            <person name="Sanders M."/>
            <person name="Ma J."/>
            <person name="Kohara Y."/>
            <person name="Sharp S."/>
            <person name="Simmonds M.N."/>
            <person name="Spiegler S."/>
            <person name="Tivey A."/>
            <person name="Sugano S."/>
            <person name="White B."/>
            <person name="Walker D."/>
            <person name="Woodward J.R."/>
            <person name="Winckler T."/>
            <person name="Tanaka Y."/>
            <person name="Shaulsky G."/>
            <person name="Schleicher M."/>
            <person name="Weinstock G.M."/>
            <person name="Rosenthal A."/>
            <person name="Cox E.C."/>
            <person name="Chisholm R.L."/>
            <person name="Gibbs R.A."/>
            <person name="Loomis W.F."/>
            <person name="Platzer M."/>
            <person name="Kay R.R."/>
            <person name="Williams J.G."/>
            <person name="Dear P.H."/>
            <person name="Noegel A.A."/>
            <person name="Barrell B.G."/>
            <person name="Kuspa A."/>
        </authorList>
    </citation>
    <scope>NUCLEOTIDE SEQUENCE [LARGE SCALE GENOMIC DNA]</scope>
    <source>
        <strain>AX4</strain>
    </source>
</reference>
<name>PROF3_DICDI</name>
<sequence length="126" mass="13315">MTWQAYIDTNLIGSGFISAQILSSADGSSWANSNGFSVSATEAQHILSCFKDSNKASAMGITINNVKNFVLKADDKSIYAKKDAGGVVLVKTNQTILVAVYNSNLQPGAAANACEALGDYLREQGF</sequence>
<proteinExistence type="inferred from homology"/>
<feature type="chain" id="PRO_0000199596" description="Profilin-3">
    <location>
        <begin position="1"/>
        <end position="126"/>
    </location>
</feature>
<keyword id="KW-0009">Actin-binding</keyword>
<keyword id="KW-0963">Cytoplasm</keyword>
<keyword id="KW-0206">Cytoskeleton</keyword>
<keyword id="KW-1185">Reference proteome</keyword>
<gene>
    <name type="primary">proC</name>
    <name type="ORF">DDB_G0271142</name>
</gene>
<protein>
    <recommendedName>
        <fullName>Profilin-3</fullName>
    </recommendedName>
    <alternativeName>
        <fullName>Profilin III</fullName>
    </alternativeName>
</protein>
<dbReference type="EMBL" id="AJ430084">
    <property type="protein sequence ID" value="CAD22551.1"/>
    <property type="molecule type" value="Genomic_DNA"/>
</dbReference>
<dbReference type="EMBL" id="AAFI02000006">
    <property type="protein sequence ID" value="EAL71701.1"/>
    <property type="molecule type" value="Genomic_DNA"/>
</dbReference>
<dbReference type="RefSeq" id="XP_645626.1">
    <property type="nucleotide sequence ID" value="XM_640534.1"/>
</dbReference>
<dbReference type="SMR" id="Q8T8M2"/>
<dbReference type="FunCoup" id="Q8T8M2">
    <property type="interactions" value="52"/>
</dbReference>
<dbReference type="STRING" id="44689.Q8T8M2"/>
<dbReference type="PaxDb" id="44689-DDB0215352"/>
<dbReference type="EnsemblProtists" id="EAL71701">
    <property type="protein sequence ID" value="EAL71701"/>
    <property type="gene ID" value="DDB_G0271142"/>
</dbReference>
<dbReference type="GeneID" id="8617818"/>
<dbReference type="KEGG" id="ddi:DDB_G0271142"/>
<dbReference type="dictyBase" id="DDB_G0271142">
    <property type="gene designation" value="proC"/>
</dbReference>
<dbReference type="VEuPathDB" id="AmoebaDB:DDB_G0271142"/>
<dbReference type="eggNOG" id="KOG1755">
    <property type="taxonomic scope" value="Eukaryota"/>
</dbReference>
<dbReference type="HOGENOM" id="CLU_120772_1_1_1"/>
<dbReference type="InParanoid" id="Q8T8M2"/>
<dbReference type="OMA" id="YICLYAE"/>
<dbReference type="PhylomeDB" id="Q8T8M2"/>
<dbReference type="PRO" id="PR:Q8T8M2"/>
<dbReference type="Proteomes" id="UP000002195">
    <property type="component" value="Chromosome 2"/>
</dbReference>
<dbReference type="GO" id="GO:0015629">
    <property type="term" value="C:actin cytoskeleton"/>
    <property type="evidence" value="ECO:0000304"/>
    <property type="project" value="dictyBase"/>
</dbReference>
<dbReference type="GO" id="GO:0005938">
    <property type="term" value="C:cell cortex"/>
    <property type="evidence" value="ECO:0000314"/>
    <property type="project" value="dictyBase"/>
</dbReference>
<dbReference type="GO" id="GO:0003779">
    <property type="term" value="F:actin binding"/>
    <property type="evidence" value="ECO:0000304"/>
    <property type="project" value="dictyBase"/>
</dbReference>
<dbReference type="GO" id="GO:0003785">
    <property type="term" value="F:actin monomer binding"/>
    <property type="evidence" value="ECO:0000318"/>
    <property type="project" value="GO_Central"/>
</dbReference>
<dbReference type="GO" id="GO:0005546">
    <property type="term" value="F:phosphatidylinositol-4,5-bisphosphate binding"/>
    <property type="evidence" value="ECO:0000314"/>
    <property type="project" value="dictyBase"/>
</dbReference>
<dbReference type="GO" id="GO:0045010">
    <property type="term" value="P:actin nucleation"/>
    <property type="evidence" value="ECO:0000304"/>
    <property type="project" value="dictyBase"/>
</dbReference>
<dbReference type="GO" id="GO:0043327">
    <property type="term" value="P:chemotaxis to cAMP"/>
    <property type="evidence" value="ECO:0000315"/>
    <property type="project" value="dictyBase"/>
</dbReference>
<dbReference type="GO" id="GO:0030837">
    <property type="term" value="P:negative regulation of actin filament polymerization"/>
    <property type="evidence" value="ECO:0000314"/>
    <property type="project" value="dictyBase"/>
</dbReference>
<dbReference type="GO" id="GO:0030838">
    <property type="term" value="P:positive regulation of actin filament polymerization"/>
    <property type="evidence" value="ECO:0000314"/>
    <property type="project" value="dictyBase"/>
</dbReference>
<dbReference type="CDD" id="cd00148">
    <property type="entry name" value="PROF"/>
    <property type="match status" value="1"/>
</dbReference>
<dbReference type="FunFam" id="3.30.450.30:FF:000001">
    <property type="entry name" value="Profilin"/>
    <property type="match status" value="1"/>
</dbReference>
<dbReference type="Gene3D" id="3.30.450.30">
    <property type="entry name" value="Dynein light chain 2a, cytoplasmic"/>
    <property type="match status" value="1"/>
</dbReference>
<dbReference type="InterPro" id="IPR048278">
    <property type="entry name" value="PFN"/>
</dbReference>
<dbReference type="InterPro" id="IPR005455">
    <property type="entry name" value="PFN_euk"/>
</dbReference>
<dbReference type="InterPro" id="IPR036140">
    <property type="entry name" value="PFN_sf"/>
</dbReference>
<dbReference type="InterPro" id="IPR027310">
    <property type="entry name" value="Profilin_CS"/>
</dbReference>
<dbReference type="PANTHER" id="PTHR11604">
    <property type="entry name" value="PROFILIN"/>
    <property type="match status" value="1"/>
</dbReference>
<dbReference type="PANTHER" id="PTHR11604:SF28">
    <property type="entry name" value="PROFILIN-RELATED"/>
    <property type="match status" value="1"/>
</dbReference>
<dbReference type="Pfam" id="PF00235">
    <property type="entry name" value="Profilin"/>
    <property type="match status" value="1"/>
</dbReference>
<dbReference type="PRINTS" id="PR00392">
    <property type="entry name" value="PROFILIN"/>
</dbReference>
<dbReference type="PRINTS" id="PR01640">
    <property type="entry name" value="PROFILINPLNT"/>
</dbReference>
<dbReference type="SMART" id="SM00392">
    <property type="entry name" value="PROF"/>
    <property type="match status" value="1"/>
</dbReference>
<dbReference type="SUPFAM" id="SSF55770">
    <property type="entry name" value="Profilin (actin-binding protein)"/>
    <property type="match status" value="1"/>
</dbReference>
<dbReference type="PROSITE" id="PS00414">
    <property type="entry name" value="PROFILIN"/>
    <property type="match status" value="1"/>
</dbReference>
<evidence type="ECO:0000250" key="1"/>
<evidence type="ECO:0000305" key="2"/>